<reference key="1">
    <citation type="journal article" date="2000" name="Nature">
        <title>DNA sequence of both chromosomes of the cholera pathogen Vibrio cholerae.</title>
        <authorList>
            <person name="Heidelberg J.F."/>
            <person name="Eisen J.A."/>
            <person name="Nelson W.C."/>
            <person name="Clayton R.A."/>
            <person name="Gwinn M.L."/>
            <person name="Dodson R.J."/>
            <person name="Haft D.H."/>
            <person name="Hickey E.K."/>
            <person name="Peterson J.D."/>
            <person name="Umayam L.A."/>
            <person name="Gill S.R."/>
            <person name="Nelson K.E."/>
            <person name="Read T.D."/>
            <person name="Tettelin H."/>
            <person name="Richardson D.L."/>
            <person name="Ermolaeva M.D."/>
            <person name="Vamathevan J.J."/>
            <person name="Bass S."/>
            <person name="Qin H."/>
            <person name="Dragoi I."/>
            <person name="Sellers P."/>
            <person name="McDonald L.A."/>
            <person name="Utterback T.R."/>
            <person name="Fleischmann R.D."/>
            <person name="Nierman W.C."/>
            <person name="White O."/>
            <person name="Salzberg S.L."/>
            <person name="Smith H.O."/>
            <person name="Colwell R.R."/>
            <person name="Mekalanos J.J."/>
            <person name="Venter J.C."/>
            <person name="Fraser C.M."/>
        </authorList>
    </citation>
    <scope>NUCLEOTIDE SEQUENCE [LARGE SCALE GENOMIC DNA]</scope>
    <source>
        <strain>ATCC 39315 / El Tor Inaba N16961</strain>
    </source>
</reference>
<keyword id="KW-0997">Cell inner membrane</keyword>
<keyword id="KW-1003">Cell membrane</keyword>
<keyword id="KW-0138">CF(0)</keyword>
<keyword id="KW-0375">Hydrogen ion transport</keyword>
<keyword id="KW-0406">Ion transport</keyword>
<keyword id="KW-0472">Membrane</keyword>
<keyword id="KW-1185">Reference proteome</keyword>
<keyword id="KW-0812">Transmembrane</keyword>
<keyword id="KW-1133">Transmembrane helix</keyword>
<keyword id="KW-0813">Transport</keyword>
<dbReference type="EMBL" id="AE003852">
    <property type="protein sequence ID" value="AAF95910.1"/>
    <property type="molecule type" value="Genomic_DNA"/>
</dbReference>
<dbReference type="PIR" id="C82035">
    <property type="entry name" value="C82035"/>
</dbReference>
<dbReference type="RefSeq" id="NP_232397.1">
    <property type="nucleotide sequence ID" value="NC_002505.1"/>
</dbReference>
<dbReference type="RefSeq" id="WP_000226753.1">
    <property type="nucleotide sequence ID" value="NZ_LT906614.1"/>
</dbReference>
<dbReference type="STRING" id="243277.VC_2771"/>
<dbReference type="TCDB" id="1.A.77.3.7">
    <property type="family name" value="the mg(2+)/ca(2+) uniporter (mcu) family"/>
</dbReference>
<dbReference type="DNASU" id="2614948"/>
<dbReference type="EnsemblBacteria" id="AAF95910">
    <property type="protein sequence ID" value="AAF95910"/>
    <property type="gene ID" value="VC_2771"/>
</dbReference>
<dbReference type="KEGG" id="vch:VC_2771"/>
<dbReference type="PATRIC" id="fig|243277.26.peg.2646"/>
<dbReference type="eggNOG" id="COG3312">
    <property type="taxonomic scope" value="Bacteria"/>
</dbReference>
<dbReference type="HOGENOM" id="CLU_121415_5_0_6"/>
<dbReference type="Proteomes" id="UP000000584">
    <property type="component" value="Chromosome 1"/>
</dbReference>
<dbReference type="GO" id="GO:0005886">
    <property type="term" value="C:plasma membrane"/>
    <property type="evidence" value="ECO:0007669"/>
    <property type="project" value="UniProtKB-SubCell"/>
</dbReference>
<dbReference type="GO" id="GO:0045259">
    <property type="term" value="C:proton-transporting ATP synthase complex"/>
    <property type="evidence" value="ECO:0007669"/>
    <property type="project" value="UniProtKB-KW"/>
</dbReference>
<dbReference type="GO" id="GO:1902600">
    <property type="term" value="P:proton transmembrane transport"/>
    <property type="evidence" value="ECO:0007669"/>
    <property type="project" value="UniProtKB-KW"/>
</dbReference>
<dbReference type="InterPro" id="IPR005598">
    <property type="entry name" value="ATP_synth_I"/>
</dbReference>
<dbReference type="NCBIfam" id="NF004414">
    <property type="entry name" value="PRK05760.1"/>
    <property type="match status" value="1"/>
</dbReference>
<dbReference type="Pfam" id="PF03899">
    <property type="entry name" value="ATP-synt_I"/>
    <property type="match status" value="1"/>
</dbReference>
<organism>
    <name type="scientific">Vibrio cholerae serotype O1 (strain ATCC 39315 / El Tor Inaba N16961)</name>
    <dbReference type="NCBI Taxonomy" id="243277"/>
    <lineage>
        <taxon>Bacteria</taxon>
        <taxon>Pseudomonadati</taxon>
        <taxon>Pseudomonadota</taxon>
        <taxon>Gammaproteobacteria</taxon>
        <taxon>Vibrionales</taxon>
        <taxon>Vibrionaceae</taxon>
        <taxon>Vibrio</taxon>
    </lineage>
</organism>
<sequence length="129" mass="13757">MVAVLARQGRELAKRLLLIQFSAVMVAAAVFAVAVNGDWGLSALVGGGIFVIANAVFAGCAFLFAGARALKMVAISFYTGEALKILITIVLFSVAYMYMQLELVPLKLTYLLALGINICAPVLFINNKK</sequence>
<proteinExistence type="inferred from homology"/>
<name>ATPZ_VIBCH</name>
<accession>Q9KNG8</accession>
<feature type="chain" id="PRO_0000071720" description="ATP synthase protein I">
    <location>
        <begin position="1"/>
        <end position="129"/>
    </location>
</feature>
<feature type="transmembrane region" description="Helical" evidence="1">
    <location>
        <begin position="16"/>
        <end position="36"/>
    </location>
</feature>
<feature type="transmembrane region" description="Helical" evidence="1">
    <location>
        <begin position="44"/>
        <end position="64"/>
    </location>
</feature>
<feature type="transmembrane region" description="Helical" evidence="1">
    <location>
        <begin position="77"/>
        <end position="97"/>
    </location>
</feature>
<feature type="transmembrane region" description="Helical" evidence="1">
    <location>
        <begin position="105"/>
        <end position="125"/>
    </location>
</feature>
<gene>
    <name type="primary">atpI</name>
    <name type="ordered locus">VC_2771</name>
</gene>
<evidence type="ECO:0000255" key="1"/>
<evidence type="ECO:0000305" key="2"/>
<comment type="function">
    <text>A possible function for this protein is to guide the assembly of the membrane sector of the ATPase enzyme complex.</text>
</comment>
<comment type="subcellular location">
    <subcellularLocation>
        <location evidence="2">Cell inner membrane</location>
        <topology evidence="2">Multi-pass membrane protein</topology>
    </subcellularLocation>
</comment>
<comment type="similarity">
    <text evidence="2">Belongs to the bacterial AtpI family.</text>
</comment>
<protein>
    <recommendedName>
        <fullName>ATP synthase protein I</fullName>
    </recommendedName>
</protein>